<sequence>MATLSSLRHLIQTHPLIDNHAHNLLSQSAACKYAKYPFEQIISEAQGVALANAPSTLSFHRAASQLATLYQSSSSDWDSVRAARDQSVQRDYEGLIRKCLEGTQVLLLDDLLTENDVELFDWHDRFTASATKRIVRIEALAASVLSQIVHGGPVPQDSSDLSAFQTLWESFSRNFSALVSDAIADPAVVGFKSVICYRTGLDVQPTDDRDTERLIRSFARTISQAAVSTPRVEDKPLNDWLVRQTLNLLKAAKVTQPNKPLQLHTGLGDNDINLLKSNPAHLQSLIAQYPEVDFVLLHSSYPYTREAGYLACVYPNVYLDLGEVFPMVSRDAQESILRESLEIVPSTRLLWSTDGHFFPETFWLANRQFRDALEKVFVDYVQNGDYTIEQAMQAAADILFHNSNRLYELNEQPPSAALSSGHQTVSRISSTDLLEKFIRSNPGVKYVWTQFIDYTATVRVRMFPVMEFAKIVRKQRRLGISMATFWMLQDDEVVGGSTTGQFYLIPDLSTLSPNVGIDSKSATVMTWWKSEQGESLEECPRTNLLNINNKLKDEFGIQATCGFEIEVVFLKPTTDPSTGEEDWAPSVTNHSWSQMTRETRRMLPLLEEIAETLASIGIHLQQFHAESAPGQFEFILPPDNPVAAVDTLIKSRQVIANIVEKHGLRATLYPRPYPSAAGTASHAHVSISPSTKEESFLAGVLQHYPAVLAFTLSGDASYDRVKSGIWAGSEWVTWGTQNREAPIRKISPGHWEIKSLDGLANMYLAMAAFLAAGYTGVKENLPLTIKDCPYDAASLPESERAALGITTKLPNTLAKSLAALESDEILRSLLGENLVEDYIIVKRAESKKLSAMDEKARRKWLVERY</sequence>
<comment type="function">
    <text>May function as a GSI-related enzyme in synthesizing a small diffusible factor that acts as an extracellular signal directing asexual sporulation and perhaps other aspects of colony growth. May be involved in brlA activation (an early transcriptional regulator for conidiation specific gene).</text>
</comment>
<comment type="subcellular location">
    <subcellularLocation>
        <location>Cytoplasm</location>
    </subcellularLocation>
</comment>
<comment type="similarity">
    <text evidence="3">Belongs to the glutamine synthetase family.</text>
</comment>
<evidence type="ECO:0000255" key="1">
    <source>
        <dbReference type="PROSITE-ProRule" id="PRU01330"/>
    </source>
</evidence>
<evidence type="ECO:0000255" key="2">
    <source>
        <dbReference type="PROSITE-ProRule" id="PRU01331"/>
    </source>
</evidence>
<evidence type="ECO:0000305" key="3"/>
<feature type="chain" id="PRO_0000153281" description="Protein fluG">
    <location>
        <begin position="1"/>
        <end position="865"/>
    </location>
</feature>
<feature type="domain" description="GS beta-grasp" evidence="1">
    <location>
        <begin position="442"/>
        <end position="533"/>
    </location>
</feature>
<feature type="domain" description="GS catalytic" evidence="2">
    <location>
        <begin position="540"/>
        <end position="865"/>
    </location>
</feature>
<feature type="mutagenesis site" description="Temperature-sensitive.">
    <original>Y</original>
    <variation>N</variation>
    <location>
        <position position="774"/>
    </location>
</feature>
<keyword id="KW-0183">Conidiation</keyword>
<keyword id="KW-0963">Cytoplasm</keyword>
<keyword id="KW-1185">Reference proteome</keyword>
<keyword id="KW-0749">Sporulation</keyword>
<protein>
    <recommendedName>
        <fullName>Protein fluG</fullName>
    </recommendedName>
</protein>
<gene>
    <name type="primary">fluG</name>
    <name type="synonym">acoD</name>
    <name type="ORF">AN4819</name>
</gene>
<reference key="1">
    <citation type="journal article" date="1994" name="Genes Dev.">
        <title>The Aspergillus nidulans fluG gene is required for production of an extracellular developmental signal and is related to prokaryotic glutamine synthetase I.</title>
        <authorList>
            <person name="Lee B."/>
            <person name="Adams T.H."/>
        </authorList>
    </citation>
    <scope>NUCLEOTIDE SEQUENCE [GENOMIC DNA]</scope>
    <source>
        <strain>FGSC 26</strain>
    </source>
</reference>
<reference key="2">
    <citation type="journal article" date="2005" name="Nature">
        <title>Sequencing of Aspergillus nidulans and comparative analysis with A. fumigatus and A. oryzae.</title>
        <authorList>
            <person name="Galagan J.E."/>
            <person name="Calvo S.E."/>
            <person name="Cuomo C."/>
            <person name="Ma L.-J."/>
            <person name="Wortman J.R."/>
            <person name="Batzoglou S."/>
            <person name="Lee S.-I."/>
            <person name="Bastuerkmen M."/>
            <person name="Spevak C.C."/>
            <person name="Clutterbuck J."/>
            <person name="Kapitonov V."/>
            <person name="Jurka J."/>
            <person name="Scazzocchio C."/>
            <person name="Farman M.L."/>
            <person name="Butler J."/>
            <person name="Purcell S."/>
            <person name="Harris S."/>
            <person name="Braus G.H."/>
            <person name="Draht O."/>
            <person name="Busch S."/>
            <person name="D'Enfert C."/>
            <person name="Bouchier C."/>
            <person name="Goldman G.H."/>
            <person name="Bell-Pedersen D."/>
            <person name="Griffiths-Jones S."/>
            <person name="Doonan J.H."/>
            <person name="Yu J."/>
            <person name="Vienken K."/>
            <person name="Pain A."/>
            <person name="Freitag M."/>
            <person name="Selker E.U."/>
            <person name="Archer D.B."/>
            <person name="Penalva M.A."/>
            <person name="Oakley B.R."/>
            <person name="Momany M."/>
            <person name="Tanaka T."/>
            <person name="Kumagai T."/>
            <person name="Asai K."/>
            <person name="Machida M."/>
            <person name="Nierman W.C."/>
            <person name="Denning D.W."/>
            <person name="Caddick M.X."/>
            <person name="Hynes M."/>
            <person name="Paoletti M."/>
            <person name="Fischer R."/>
            <person name="Miller B.L."/>
            <person name="Dyer P.S."/>
            <person name="Sachs M.S."/>
            <person name="Osmani S.A."/>
            <person name="Birren B.W."/>
        </authorList>
    </citation>
    <scope>NUCLEOTIDE SEQUENCE [LARGE SCALE GENOMIC DNA]</scope>
    <source>
        <strain>FGSC A4 / ATCC 38163 / CBS 112.46 / NRRL 194 / M139</strain>
    </source>
</reference>
<reference key="3">
    <citation type="journal article" date="2009" name="Fungal Genet. Biol.">
        <title>The 2008 update of the Aspergillus nidulans genome annotation: a community effort.</title>
        <authorList>
            <person name="Wortman J.R."/>
            <person name="Gilsenan J.M."/>
            <person name="Joardar V."/>
            <person name="Deegan J."/>
            <person name="Clutterbuck J."/>
            <person name="Andersen M.R."/>
            <person name="Archer D."/>
            <person name="Bencina M."/>
            <person name="Braus G."/>
            <person name="Coutinho P."/>
            <person name="von Dohren H."/>
            <person name="Doonan J."/>
            <person name="Driessen A.J."/>
            <person name="Durek P."/>
            <person name="Espeso E."/>
            <person name="Fekete E."/>
            <person name="Flipphi M."/>
            <person name="Estrada C.G."/>
            <person name="Geysens S."/>
            <person name="Goldman G."/>
            <person name="de Groot P.W."/>
            <person name="Hansen K."/>
            <person name="Harris S.D."/>
            <person name="Heinekamp T."/>
            <person name="Helmstaedt K."/>
            <person name="Henrissat B."/>
            <person name="Hofmann G."/>
            <person name="Homan T."/>
            <person name="Horio T."/>
            <person name="Horiuchi H."/>
            <person name="James S."/>
            <person name="Jones M."/>
            <person name="Karaffa L."/>
            <person name="Karanyi Z."/>
            <person name="Kato M."/>
            <person name="Keller N."/>
            <person name="Kelly D.E."/>
            <person name="Kiel J.A."/>
            <person name="Kim J.M."/>
            <person name="van der Klei I.J."/>
            <person name="Klis F.M."/>
            <person name="Kovalchuk A."/>
            <person name="Krasevec N."/>
            <person name="Kubicek C.P."/>
            <person name="Liu B."/>
            <person name="Maccabe A."/>
            <person name="Meyer V."/>
            <person name="Mirabito P."/>
            <person name="Miskei M."/>
            <person name="Mos M."/>
            <person name="Mullins J."/>
            <person name="Nelson D.R."/>
            <person name="Nielsen J."/>
            <person name="Oakley B.R."/>
            <person name="Osmani S.A."/>
            <person name="Pakula T."/>
            <person name="Paszewski A."/>
            <person name="Paulsen I."/>
            <person name="Pilsyk S."/>
            <person name="Pocsi I."/>
            <person name="Punt P.J."/>
            <person name="Ram A.F."/>
            <person name="Ren Q."/>
            <person name="Robellet X."/>
            <person name="Robson G."/>
            <person name="Seiboth B."/>
            <person name="van Solingen P."/>
            <person name="Specht T."/>
            <person name="Sun J."/>
            <person name="Taheri-Talesh N."/>
            <person name="Takeshita N."/>
            <person name="Ussery D."/>
            <person name="vanKuyk P.A."/>
            <person name="Visser H."/>
            <person name="van de Vondervoort P.J."/>
            <person name="de Vries R.P."/>
            <person name="Walton J."/>
            <person name="Xiang X."/>
            <person name="Xiong Y."/>
            <person name="Zeng A.P."/>
            <person name="Brandt B.W."/>
            <person name="Cornell M.J."/>
            <person name="van den Hondel C.A."/>
            <person name="Visser J."/>
            <person name="Oliver S.G."/>
            <person name="Turner G."/>
        </authorList>
    </citation>
    <scope>GENOME REANNOTATION</scope>
    <source>
        <strain>FGSC A4 / ATCC 38163 / CBS 112.46 / NRRL 194 / M139</strain>
    </source>
</reference>
<dbReference type="EMBL" id="L27817">
    <property type="protein sequence ID" value="AAC37414.1"/>
    <property type="molecule type" value="Genomic_DNA"/>
</dbReference>
<dbReference type="EMBL" id="AACD01000081">
    <property type="protein sequence ID" value="EAA60389.1"/>
    <property type="molecule type" value="Genomic_DNA"/>
</dbReference>
<dbReference type="EMBL" id="BN001303">
    <property type="protein sequence ID" value="CBF76713.1"/>
    <property type="molecule type" value="Genomic_DNA"/>
</dbReference>
<dbReference type="PIR" id="A53186">
    <property type="entry name" value="A53186"/>
</dbReference>
<dbReference type="RefSeq" id="XP_662423.1">
    <property type="nucleotide sequence ID" value="XM_657331.1"/>
</dbReference>
<dbReference type="SMR" id="P38094"/>
<dbReference type="STRING" id="227321.P38094"/>
<dbReference type="EnsemblFungi" id="CBF76713">
    <property type="protein sequence ID" value="CBF76713"/>
    <property type="gene ID" value="ANIA_04819"/>
</dbReference>
<dbReference type="GeneID" id="2872617"/>
<dbReference type="KEGG" id="ani:ANIA_04819"/>
<dbReference type="VEuPathDB" id="FungiDB:AN4819"/>
<dbReference type="eggNOG" id="KOG0683">
    <property type="taxonomic scope" value="Eukaryota"/>
</dbReference>
<dbReference type="HOGENOM" id="CLU_017290_6_3_1"/>
<dbReference type="InParanoid" id="P38094"/>
<dbReference type="OMA" id="LEGCPRT"/>
<dbReference type="OrthoDB" id="3364440at2759"/>
<dbReference type="Proteomes" id="UP000000560">
    <property type="component" value="Chromosome III"/>
</dbReference>
<dbReference type="GO" id="GO:0005737">
    <property type="term" value="C:cytoplasm"/>
    <property type="evidence" value="ECO:0000314"/>
    <property type="project" value="AspGD"/>
</dbReference>
<dbReference type="GO" id="GO:0016787">
    <property type="term" value="F:hydrolase activity"/>
    <property type="evidence" value="ECO:0007669"/>
    <property type="project" value="InterPro"/>
</dbReference>
<dbReference type="GO" id="GO:0001896">
    <property type="term" value="P:autolysis"/>
    <property type="evidence" value="ECO:0000315"/>
    <property type="project" value="AspGD"/>
</dbReference>
<dbReference type="GO" id="GO:0048315">
    <property type="term" value="P:conidium formation"/>
    <property type="evidence" value="ECO:0000315"/>
    <property type="project" value="AspGD"/>
</dbReference>
<dbReference type="GO" id="GO:0075307">
    <property type="term" value="P:positive regulation of conidium formation"/>
    <property type="evidence" value="ECO:0000315"/>
    <property type="project" value="AspGD"/>
</dbReference>
<dbReference type="GO" id="GO:0010914">
    <property type="term" value="P:positive regulation of sterigmatocystin biosynthetic process"/>
    <property type="evidence" value="ECO:0000315"/>
    <property type="project" value="AspGD"/>
</dbReference>
<dbReference type="GO" id="GO:1900376">
    <property type="term" value="P:regulation of secondary metabolite biosynthetic process"/>
    <property type="evidence" value="ECO:0000315"/>
    <property type="project" value="AspGD"/>
</dbReference>
<dbReference type="GO" id="GO:0010913">
    <property type="term" value="P:regulation of sterigmatocystin biosynthetic process"/>
    <property type="evidence" value="ECO:0000315"/>
    <property type="project" value="AspGD"/>
</dbReference>
<dbReference type="GO" id="GO:0000905">
    <property type="term" value="P:sporocarp development involved in asexual reproduction"/>
    <property type="evidence" value="ECO:0000315"/>
    <property type="project" value="AspGD"/>
</dbReference>
<dbReference type="GO" id="GO:0030435">
    <property type="term" value="P:sporulation resulting in formation of a cellular spore"/>
    <property type="evidence" value="ECO:0007669"/>
    <property type="project" value="UniProtKB-KW"/>
</dbReference>
<dbReference type="GO" id="GO:0045461">
    <property type="term" value="P:sterigmatocystin biosynthetic process"/>
    <property type="evidence" value="ECO:0000315"/>
    <property type="project" value="AspGD"/>
</dbReference>
<dbReference type="FunFam" id="3.20.20.140:FF:000074">
    <property type="entry name" value="Extracellular developmental signal biosynthesis protein FluG"/>
    <property type="match status" value="1"/>
</dbReference>
<dbReference type="FunFam" id="3.30.590.10:FF:000013">
    <property type="entry name" value="Related to fluG protein"/>
    <property type="match status" value="1"/>
</dbReference>
<dbReference type="Gene3D" id="3.30.590.10">
    <property type="entry name" value="Glutamine synthetase/guanido kinase, catalytic domain"/>
    <property type="match status" value="1"/>
</dbReference>
<dbReference type="Gene3D" id="3.20.20.140">
    <property type="entry name" value="Metal-dependent hydrolases"/>
    <property type="match status" value="1"/>
</dbReference>
<dbReference type="InterPro" id="IPR006680">
    <property type="entry name" value="Amidohydro-rel"/>
</dbReference>
<dbReference type="InterPro" id="IPR008147">
    <property type="entry name" value="Gln_synt_N"/>
</dbReference>
<dbReference type="InterPro" id="IPR014746">
    <property type="entry name" value="Gln_synth/guanido_kin_cat_dom"/>
</dbReference>
<dbReference type="InterPro" id="IPR008146">
    <property type="entry name" value="Gln_synth_cat_dom"/>
</dbReference>
<dbReference type="InterPro" id="IPR032466">
    <property type="entry name" value="Metal_Hydrolase"/>
</dbReference>
<dbReference type="PANTHER" id="PTHR43383:SF2">
    <property type="entry name" value="AMIDOHYDROLASE 2 FAMILY PROTEIN"/>
    <property type="match status" value="1"/>
</dbReference>
<dbReference type="PANTHER" id="PTHR43383">
    <property type="entry name" value="NODULIN 6"/>
    <property type="match status" value="1"/>
</dbReference>
<dbReference type="Pfam" id="PF04909">
    <property type="entry name" value="Amidohydro_2"/>
    <property type="match status" value="1"/>
</dbReference>
<dbReference type="Pfam" id="PF00120">
    <property type="entry name" value="Gln-synt_C"/>
    <property type="match status" value="1"/>
</dbReference>
<dbReference type="SMART" id="SM01230">
    <property type="entry name" value="Gln-synt_C"/>
    <property type="match status" value="1"/>
</dbReference>
<dbReference type="SUPFAM" id="SSF55931">
    <property type="entry name" value="Glutamine synthetase/guanido kinase"/>
    <property type="match status" value="1"/>
</dbReference>
<dbReference type="SUPFAM" id="SSF51556">
    <property type="entry name" value="Metallo-dependent hydrolases"/>
    <property type="match status" value="1"/>
</dbReference>
<dbReference type="PROSITE" id="PS51986">
    <property type="entry name" value="GS_BETA_GRASP"/>
    <property type="match status" value="1"/>
</dbReference>
<dbReference type="PROSITE" id="PS51987">
    <property type="entry name" value="GS_CATALYTIC"/>
    <property type="match status" value="1"/>
</dbReference>
<name>FLUG_EMENI</name>
<accession>P38094</accession>
<accession>C8VAB0</accession>
<accession>Q5B3R1</accession>
<proteinExistence type="evidence at protein level"/>
<organism>
    <name type="scientific">Emericella nidulans (strain FGSC A4 / ATCC 38163 / CBS 112.46 / NRRL 194 / M139)</name>
    <name type="common">Aspergillus nidulans</name>
    <dbReference type="NCBI Taxonomy" id="227321"/>
    <lineage>
        <taxon>Eukaryota</taxon>
        <taxon>Fungi</taxon>
        <taxon>Dikarya</taxon>
        <taxon>Ascomycota</taxon>
        <taxon>Pezizomycotina</taxon>
        <taxon>Eurotiomycetes</taxon>
        <taxon>Eurotiomycetidae</taxon>
        <taxon>Eurotiales</taxon>
        <taxon>Aspergillaceae</taxon>
        <taxon>Aspergillus</taxon>
        <taxon>Aspergillus subgen. Nidulantes</taxon>
    </lineage>
</organism>